<protein>
    <recommendedName>
        <fullName>Alginate production protein AlgE</fullName>
    </recommendedName>
</protein>
<evidence type="ECO:0000255" key="1"/>
<evidence type="ECO:0000256" key="2">
    <source>
        <dbReference type="SAM" id="MobiDB-lite"/>
    </source>
</evidence>
<evidence type="ECO:0000305" key="3"/>
<comment type="function">
    <text>Has non-porin-like, channel-forming properties and probably functions as an alginate permeability pore.</text>
</comment>
<comment type="pathway">
    <text>Glycan biosynthesis; alginate biosynthesis.</text>
</comment>
<comment type="subcellular location">
    <subcellularLocation>
        <location>Cell outer membrane</location>
        <topology>Peripheral membrane protein</topology>
    </subcellularLocation>
</comment>
<comment type="similarity">
    <text evidence="3">Belongs to the AlgE family.</text>
</comment>
<name>ALGE_AZOVI</name>
<reference key="1">
    <citation type="journal article" date="1996" name="Microbiology">
        <title>The Azotobacter vinelandii gene algJ encodes an outer-membrane protein presumably involved in export of alginate.</title>
        <authorList>
            <person name="Rehm B.H.A."/>
        </authorList>
    </citation>
    <scope>NUCLEOTIDE SEQUENCE [GENOMIC DNA]</scope>
    <source>
        <strain>E</strain>
    </source>
</reference>
<reference key="2">
    <citation type="journal article" date="1997" name="FEMS Microbiol. Lett.">
        <title>Isolation and characterization of an Azotobacter vinelandii algK mutant.</title>
        <authorList>
            <person name="Mejia-Ruiz H."/>
            <person name="Moreno S."/>
            <person name="Guzman J."/>
            <person name="Najera R."/>
            <person name="Leon R."/>
            <person name="Soberon-Chavez G."/>
            <person name="Espin G."/>
        </authorList>
    </citation>
    <scope>NUCLEOTIDE SEQUENCE [GENOMIC DNA] OF 1-128</scope>
    <source>
        <strain>ATCC 9046</strain>
    </source>
</reference>
<sequence length="484" mass="54611">MSRKQRISAGLGLGASLLCCNPLFAGPVGPDRNFGMEVKVTAQSEDDRDLDTRSGGDAEGIALDLRPWVYGQRGNWGAMVMLQAVAATDIIETDPTDPNEEPGGDPANGFSRDSSRDPDKSYLALREFELGTIGRQRIRSLTNEGTWWDIHMESVNWTMDTSLLRAQAGVAKRFDEYRTDLDNLSAEDKDRTHVFGGLDYQWRQGHWAGFKVHHTSDDGDLPDSQMDVYEDRQSKSYTGDLTWLSVHLDRDFFNPRSTLPINYWGEFTWLTGEMDRSHFASDGSADHYKDVDVDAWAVDLGLRWNISDRWNVGAAYARGQAGEGDDESEQFMQTGLQSNRSTFTGLQTRIHRFGEASRGELTNLQVGTLFTSWKPREDLETSLIYHKFWRVDDDEDLGQNGISPIEKDGKPALKAGEKDLGQEVDLIITRYFNQGMLPANWGGELDEQSALIRLRSGLFFPSNAYASKGDSKMHRVFVDMIWRF</sequence>
<dbReference type="EMBL" id="X86533">
    <property type="protein sequence ID" value="CAA60245.1"/>
    <property type="molecule type" value="Genomic_DNA"/>
</dbReference>
<dbReference type="EMBL" id="X98863">
    <property type="protein sequence ID" value="CAA67371.1"/>
    <property type="molecule type" value="Genomic_DNA"/>
</dbReference>
<dbReference type="SMR" id="Q44497"/>
<dbReference type="TCDB" id="1.B.13.1.2">
    <property type="family name" value="the alginate export porin (aep) family"/>
</dbReference>
<dbReference type="UniPathway" id="UPA00286"/>
<dbReference type="GO" id="GO:0009279">
    <property type="term" value="C:cell outer membrane"/>
    <property type="evidence" value="ECO:0007669"/>
    <property type="project" value="UniProtKB-SubCell"/>
</dbReference>
<dbReference type="GO" id="GO:0042121">
    <property type="term" value="P:alginic acid biosynthetic process"/>
    <property type="evidence" value="ECO:0007669"/>
    <property type="project" value="UniProtKB-UniPathway"/>
</dbReference>
<dbReference type="Gene3D" id="2.40.160.100">
    <property type="match status" value="1"/>
</dbReference>
<dbReference type="InterPro" id="IPR025388">
    <property type="entry name" value="Alginate_export_dom"/>
</dbReference>
<dbReference type="InterPro" id="IPR053728">
    <property type="entry name" value="Alginate_Permeability_Chnl"/>
</dbReference>
<dbReference type="Pfam" id="PF13372">
    <property type="entry name" value="Alginate_exp"/>
    <property type="match status" value="1"/>
</dbReference>
<dbReference type="SUPFAM" id="SSF56935">
    <property type="entry name" value="Porins"/>
    <property type="match status" value="1"/>
</dbReference>
<accession>Q44497</accession>
<accession>P94201</accession>
<organism>
    <name type="scientific">Azotobacter vinelandii</name>
    <dbReference type="NCBI Taxonomy" id="354"/>
    <lineage>
        <taxon>Bacteria</taxon>
        <taxon>Pseudomonadati</taxon>
        <taxon>Pseudomonadota</taxon>
        <taxon>Gammaproteobacteria</taxon>
        <taxon>Pseudomonadales</taxon>
        <taxon>Pseudomonadaceae</taxon>
        <taxon>Azotobacter</taxon>
    </lineage>
</organism>
<keyword id="KW-0016">Alginate biosynthesis</keyword>
<keyword id="KW-0998">Cell outer membrane</keyword>
<keyword id="KW-0472">Membrane</keyword>
<keyword id="KW-0732">Signal</keyword>
<feature type="signal peptide" evidence="1">
    <location>
        <begin position="1"/>
        <end position="25"/>
    </location>
</feature>
<feature type="chain" id="PRO_0000020662" description="Alginate production protein AlgE">
    <location>
        <begin position="26"/>
        <end position="484"/>
    </location>
</feature>
<feature type="region of interest" description="Disordered" evidence="2">
    <location>
        <begin position="93"/>
        <end position="118"/>
    </location>
</feature>
<feature type="compositionally biased region" description="Acidic residues" evidence="2">
    <location>
        <begin position="93"/>
        <end position="103"/>
    </location>
</feature>
<gene>
    <name type="primary">algE</name>
    <name type="synonym">algJ</name>
</gene>
<proteinExistence type="inferred from homology"/>